<keyword id="KW-1185">Reference proteome</keyword>
<keyword id="KW-0687">Ribonucleoprotein</keyword>
<keyword id="KW-0689">Ribosomal protein</keyword>
<name>RL34_AROAE</name>
<accession>Q5P4P1</accession>
<protein>
    <recommendedName>
        <fullName evidence="1">Large ribosomal subunit protein bL34</fullName>
    </recommendedName>
    <alternativeName>
        <fullName evidence="2">50S ribosomal protein L34</fullName>
    </alternativeName>
</protein>
<feature type="chain" id="PRO_0000187336" description="Large ribosomal subunit protein bL34">
    <location>
        <begin position="1"/>
        <end position="44"/>
    </location>
</feature>
<organism>
    <name type="scientific">Aromatoleum aromaticum (strain DSM 19018 / LMG 30748 / EbN1)</name>
    <name type="common">Azoarcus sp. (strain EbN1)</name>
    <dbReference type="NCBI Taxonomy" id="76114"/>
    <lineage>
        <taxon>Bacteria</taxon>
        <taxon>Pseudomonadati</taxon>
        <taxon>Pseudomonadota</taxon>
        <taxon>Betaproteobacteria</taxon>
        <taxon>Rhodocyclales</taxon>
        <taxon>Rhodocyclaceae</taxon>
        <taxon>Aromatoleum</taxon>
    </lineage>
</organism>
<evidence type="ECO:0000255" key="1">
    <source>
        <dbReference type="HAMAP-Rule" id="MF_00391"/>
    </source>
</evidence>
<evidence type="ECO:0000305" key="2"/>
<sequence length="44" mass="5215">MKRTYQPSVVRRKRTHGFLVRMKTRGGRAVIRARRAKGRHRLAV</sequence>
<reference key="1">
    <citation type="journal article" date="2005" name="Arch. Microbiol.">
        <title>The genome sequence of an anaerobic aromatic-degrading denitrifying bacterium, strain EbN1.</title>
        <authorList>
            <person name="Rabus R."/>
            <person name="Kube M."/>
            <person name="Heider J."/>
            <person name="Beck A."/>
            <person name="Heitmann K."/>
            <person name="Widdel F."/>
            <person name="Reinhardt R."/>
        </authorList>
    </citation>
    <scope>NUCLEOTIDE SEQUENCE [LARGE SCALE GENOMIC DNA]</scope>
    <source>
        <strain>DSM 19018 / LMG 30748 / EbN1</strain>
    </source>
</reference>
<comment type="similarity">
    <text evidence="1">Belongs to the bacterial ribosomal protein bL34 family.</text>
</comment>
<gene>
    <name evidence="1" type="primary">rpmH</name>
    <name type="ordered locus">AZOSEA15960</name>
    <name type="ORF">ebC7</name>
</gene>
<proteinExistence type="inferred from homology"/>
<dbReference type="EMBL" id="CR555306">
    <property type="protein sequence ID" value="CAI07721.1"/>
    <property type="molecule type" value="Genomic_DNA"/>
</dbReference>
<dbReference type="RefSeq" id="WP_002926183.1">
    <property type="nucleotide sequence ID" value="NC_006513.1"/>
</dbReference>
<dbReference type="SMR" id="Q5P4P1"/>
<dbReference type="STRING" id="76114.ebC7"/>
<dbReference type="KEGG" id="eba:ebC7"/>
<dbReference type="eggNOG" id="COG0230">
    <property type="taxonomic scope" value="Bacteria"/>
</dbReference>
<dbReference type="HOGENOM" id="CLU_129938_2_0_4"/>
<dbReference type="Proteomes" id="UP000006552">
    <property type="component" value="Chromosome"/>
</dbReference>
<dbReference type="GO" id="GO:1990904">
    <property type="term" value="C:ribonucleoprotein complex"/>
    <property type="evidence" value="ECO:0007669"/>
    <property type="project" value="UniProtKB-KW"/>
</dbReference>
<dbReference type="GO" id="GO:0005840">
    <property type="term" value="C:ribosome"/>
    <property type="evidence" value="ECO:0007669"/>
    <property type="project" value="UniProtKB-KW"/>
</dbReference>
<dbReference type="GO" id="GO:0003735">
    <property type="term" value="F:structural constituent of ribosome"/>
    <property type="evidence" value="ECO:0007669"/>
    <property type="project" value="InterPro"/>
</dbReference>
<dbReference type="GO" id="GO:0006412">
    <property type="term" value="P:translation"/>
    <property type="evidence" value="ECO:0007669"/>
    <property type="project" value="UniProtKB-UniRule"/>
</dbReference>
<dbReference type="FunFam" id="1.10.287.3980:FF:000001">
    <property type="entry name" value="Mitochondrial ribosomal protein L34"/>
    <property type="match status" value="1"/>
</dbReference>
<dbReference type="Gene3D" id="1.10.287.3980">
    <property type="match status" value="1"/>
</dbReference>
<dbReference type="HAMAP" id="MF_00391">
    <property type="entry name" value="Ribosomal_bL34"/>
    <property type="match status" value="1"/>
</dbReference>
<dbReference type="InterPro" id="IPR000271">
    <property type="entry name" value="Ribosomal_bL34"/>
</dbReference>
<dbReference type="InterPro" id="IPR020939">
    <property type="entry name" value="Ribosomal_bL34_CS"/>
</dbReference>
<dbReference type="NCBIfam" id="TIGR01030">
    <property type="entry name" value="rpmH_bact"/>
    <property type="match status" value="1"/>
</dbReference>
<dbReference type="PANTHER" id="PTHR14503:SF4">
    <property type="entry name" value="LARGE RIBOSOMAL SUBUNIT PROTEIN BL34M"/>
    <property type="match status" value="1"/>
</dbReference>
<dbReference type="PANTHER" id="PTHR14503">
    <property type="entry name" value="MITOCHONDRIAL RIBOSOMAL PROTEIN 34 FAMILY MEMBER"/>
    <property type="match status" value="1"/>
</dbReference>
<dbReference type="Pfam" id="PF00468">
    <property type="entry name" value="Ribosomal_L34"/>
    <property type="match status" value="1"/>
</dbReference>
<dbReference type="PROSITE" id="PS00784">
    <property type="entry name" value="RIBOSOMAL_L34"/>
    <property type="match status" value="1"/>
</dbReference>